<comment type="function">
    <text evidence="1">Catalyzes the pyrimidine ring opening between N-3 and C-4 by an unusual flavin hydroperoxide-catalyzed mechanism, adding oxygen atoms in the process to yield ureidoacrylate peracid, that immediately reacts with FMN forming ureidoacrylate and FMN-N(5)-oxide. The FMN-N(5)-oxide reacts spontaneously with NADH to produce FMN. Requires the flavin reductase RutF to regenerate FMN in vivo.</text>
</comment>
<comment type="catalytic activity">
    <reaction evidence="1">
        <text>uracil + FMNH2 + NADH + O2 = (Z)-3-ureidoacrylate + FMN + NAD(+) + H2O + H(+)</text>
        <dbReference type="Rhea" id="RHEA:31587"/>
        <dbReference type="ChEBI" id="CHEBI:15377"/>
        <dbReference type="ChEBI" id="CHEBI:15378"/>
        <dbReference type="ChEBI" id="CHEBI:15379"/>
        <dbReference type="ChEBI" id="CHEBI:17568"/>
        <dbReference type="ChEBI" id="CHEBI:57540"/>
        <dbReference type="ChEBI" id="CHEBI:57618"/>
        <dbReference type="ChEBI" id="CHEBI:57945"/>
        <dbReference type="ChEBI" id="CHEBI:58210"/>
        <dbReference type="ChEBI" id="CHEBI:59891"/>
        <dbReference type="EC" id="1.14.99.46"/>
    </reaction>
</comment>
<comment type="catalytic activity">
    <reaction evidence="1">
        <text>thymine + FMNH2 + NADH + O2 = (Z)-2-methylureidoacrylate + FMN + NAD(+) + H2O + H(+)</text>
        <dbReference type="Rhea" id="RHEA:31599"/>
        <dbReference type="ChEBI" id="CHEBI:15377"/>
        <dbReference type="ChEBI" id="CHEBI:15378"/>
        <dbReference type="ChEBI" id="CHEBI:15379"/>
        <dbReference type="ChEBI" id="CHEBI:17821"/>
        <dbReference type="ChEBI" id="CHEBI:57540"/>
        <dbReference type="ChEBI" id="CHEBI:57618"/>
        <dbReference type="ChEBI" id="CHEBI:57945"/>
        <dbReference type="ChEBI" id="CHEBI:58210"/>
        <dbReference type="ChEBI" id="CHEBI:143783"/>
        <dbReference type="EC" id="1.14.99.46"/>
    </reaction>
</comment>
<comment type="similarity">
    <text evidence="1">Belongs to the NtaA/SnaA/DszA monooxygenase family. RutA subfamily.</text>
</comment>
<name>RUTA_SERP5</name>
<proteinExistence type="inferred from homology"/>
<accession>A8GCT6</accession>
<organism>
    <name type="scientific">Serratia proteamaculans (strain 568)</name>
    <dbReference type="NCBI Taxonomy" id="399741"/>
    <lineage>
        <taxon>Bacteria</taxon>
        <taxon>Pseudomonadati</taxon>
        <taxon>Pseudomonadota</taxon>
        <taxon>Gammaproteobacteria</taxon>
        <taxon>Enterobacterales</taxon>
        <taxon>Yersiniaceae</taxon>
        <taxon>Serratia</taxon>
    </lineage>
</organism>
<evidence type="ECO:0000255" key="1">
    <source>
        <dbReference type="HAMAP-Rule" id="MF_01699"/>
    </source>
</evidence>
<keyword id="KW-0285">Flavoprotein</keyword>
<keyword id="KW-0288">FMN</keyword>
<keyword id="KW-0503">Monooxygenase</keyword>
<keyword id="KW-0521">NADP</keyword>
<keyword id="KW-0560">Oxidoreductase</keyword>
<dbReference type="EC" id="1.14.99.46" evidence="1"/>
<dbReference type="EMBL" id="CP000826">
    <property type="protein sequence ID" value="ABV40926.1"/>
    <property type="molecule type" value="Genomic_DNA"/>
</dbReference>
<dbReference type="SMR" id="A8GCT6"/>
<dbReference type="STRING" id="399741.Spro_1823"/>
<dbReference type="KEGG" id="spe:Spro_1823"/>
<dbReference type="eggNOG" id="COG2141">
    <property type="taxonomic scope" value="Bacteria"/>
</dbReference>
<dbReference type="HOGENOM" id="CLU_027853_1_1_6"/>
<dbReference type="OrthoDB" id="9814695at2"/>
<dbReference type="GO" id="GO:0008726">
    <property type="term" value="F:alkanesulfonate monooxygenase activity"/>
    <property type="evidence" value="ECO:0007669"/>
    <property type="project" value="TreeGrafter"/>
</dbReference>
<dbReference type="GO" id="GO:0052614">
    <property type="term" value="F:uracil oxygenase activity"/>
    <property type="evidence" value="ECO:0007669"/>
    <property type="project" value="UniProtKB-EC"/>
</dbReference>
<dbReference type="GO" id="GO:0046306">
    <property type="term" value="P:alkanesulfonate catabolic process"/>
    <property type="evidence" value="ECO:0007669"/>
    <property type="project" value="TreeGrafter"/>
</dbReference>
<dbReference type="GO" id="GO:0019740">
    <property type="term" value="P:nitrogen utilization"/>
    <property type="evidence" value="ECO:0007669"/>
    <property type="project" value="UniProtKB-UniRule"/>
</dbReference>
<dbReference type="GO" id="GO:0006212">
    <property type="term" value="P:uracil catabolic process"/>
    <property type="evidence" value="ECO:0007669"/>
    <property type="project" value="UniProtKB-UniRule"/>
</dbReference>
<dbReference type="CDD" id="cd01094">
    <property type="entry name" value="Alkanesulfonate_monoxygenase"/>
    <property type="match status" value="1"/>
</dbReference>
<dbReference type="FunFam" id="3.20.20.30:FF:000003">
    <property type="entry name" value="Pyrimidine monooxygenase RutA"/>
    <property type="match status" value="1"/>
</dbReference>
<dbReference type="Gene3D" id="3.20.20.30">
    <property type="entry name" value="Luciferase-like domain"/>
    <property type="match status" value="1"/>
</dbReference>
<dbReference type="HAMAP" id="MF_01699">
    <property type="entry name" value="RutA"/>
    <property type="match status" value="1"/>
</dbReference>
<dbReference type="InterPro" id="IPR011251">
    <property type="entry name" value="Luciferase-like_dom"/>
</dbReference>
<dbReference type="InterPro" id="IPR036661">
    <property type="entry name" value="Luciferase-like_sf"/>
</dbReference>
<dbReference type="InterPro" id="IPR019914">
    <property type="entry name" value="Pyrimidine_monooxygenase_RutA"/>
</dbReference>
<dbReference type="InterPro" id="IPR050172">
    <property type="entry name" value="SsuD_RutA_monooxygenase"/>
</dbReference>
<dbReference type="NCBIfam" id="TIGR03612">
    <property type="entry name" value="RutA"/>
    <property type="match status" value="1"/>
</dbReference>
<dbReference type="PANTHER" id="PTHR42847">
    <property type="entry name" value="ALKANESULFONATE MONOOXYGENASE"/>
    <property type="match status" value="1"/>
</dbReference>
<dbReference type="PANTHER" id="PTHR42847:SF4">
    <property type="entry name" value="ALKANESULFONATE MONOOXYGENASE-RELATED"/>
    <property type="match status" value="1"/>
</dbReference>
<dbReference type="Pfam" id="PF00296">
    <property type="entry name" value="Bac_luciferase"/>
    <property type="match status" value="1"/>
</dbReference>
<dbReference type="SUPFAM" id="SSF51679">
    <property type="entry name" value="Bacterial luciferase-like"/>
    <property type="match status" value="1"/>
</dbReference>
<protein>
    <recommendedName>
        <fullName evidence="1">Pyrimidine monooxygenase RutA</fullName>
        <ecNumber evidence="1">1.14.99.46</ecNumber>
    </recommendedName>
</protein>
<gene>
    <name evidence="1" type="primary">rutA</name>
    <name type="ordered locus">Spro_1823</name>
</gene>
<sequence>MKIGVFIPIGNNGWLISSNAPQYQPTFELNKTIVQKAEHYNFDFALSMIKLRGFGGKTEFWDHNLESFTLMAGLAAVTSRIKIYATAATLTMPPAIVARMASTIDSISNGRFGLNVVTGWQKPEYEQMGMWPGDDYFGRRYDYLAEYVNVLRDLWGTGKSDFKGEFFQMDDCRVSPQPQADIKVICAGQSDAGMAFSAKYADYNFCFGKGVNTPTAFAPTAARLKIAADSEGRSVACYVLFMIIADETDEAARAKWESYKAGADTEALAWLTEQSGKDTKSGADTNVRQMADPTSAVNINMGTLVGSYANVARMMDEIATVPGTEGVLLTFDDFITGVENFGERIQPLMKSRADVCPQTAASREVA</sequence>
<feature type="chain" id="PRO_0000402638" description="Pyrimidine monooxygenase RutA">
    <location>
        <begin position="1"/>
        <end position="366"/>
    </location>
</feature>
<feature type="binding site" evidence="1">
    <location>
        <begin position="49"/>
        <end position="50"/>
    </location>
    <ligand>
        <name>FMN</name>
        <dbReference type="ChEBI" id="CHEBI:58210"/>
    </ligand>
</feature>
<feature type="binding site" evidence="1">
    <location>
        <position position="115"/>
    </location>
    <ligand>
        <name>FMN</name>
        <dbReference type="ChEBI" id="CHEBI:58210"/>
    </ligand>
</feature>
<feature type="binding site" evidence="1">
    <location>
        <position position="124"/>
    </location>
    <ligand>
        <name>FMN</name>
        <dbReference type="ChEBI" id="CHEBI:58210"/>
    </ligand>
</feature>
<feature type="binding site" evidence="1">
    <location>
        <begin position="140"/>
        <end position="141"/>
    </location>
    <ligand>
        <name>FMN</name>
        <dbReference type="ChEBI" id="CHEBI:58210"/>
    </ligand>
</feature>
<feature type="binding site" evidence="1">
    <location>
        <position position="190"/>
    </location>
    <ligand>
        <name>FMN</name>
        <dbReference type="ChEBI" id="CHEBI:58210"/>
    </ligand>
</feature>
<reference key="1">
    <citation type="submission" date="2007-09" db="EMBL/GenBank/DDBJ databases">
        <title>Complete sequence of chromosome of Serratia proteamaculans 568.</title>
        <authorList>
            <consortium name="US DOE Joint Genome Institute"/>
            <person name="Copeland A."/>
            <person name="Lucas S."/>
            <person name="Lapidus A."/>
            <person name="Barry K."/>
            <person name="Glavina del Rio T."/>
            <person name="Dalin E."/>
            <person name="Tice H."/>
            <person name="Pitluck S."/>
            <person name="Chain P."/>
            <person name="Malfatti S."/>
            <person name="Shin M."/>
            <person name="Vergez L."/>
            <person name="Schmutz J."/>
            <person name="Larimer F."/>
            <person name="Land M."/>
            <person name="Hauser L."/>
            <person name="Kyrpides N."/>
            <person name="Kim E."/>
            <person name="Taghavi S."/>
            <person name="Newman L."/>
            <person name="Vangronsveld J."/>
            <person name="van der Lelie D."/>
            <person name="Richardson P."/>
        </authorList>
    </citation>
    <scope>NUCLEOTIDE SEQUENCE [LARGE SCALE GENOMIC DNA]</scope>
    <source>
        <strain>568</strain>
    </source>
</reference>